<dbReference type="EMBL" id="AE015929">
    <property type="protein sequence ID" value="AAO05951.1"/>
    <property type="molecule type" value="Genomic_DNA"/>
</dbReference>
<dbReference type="RefSeq" id="NP_765864.1">
    <property type="nucleotide sequence ID" value="NC_004461.1"/>
</dbReference>
<dbReference type="RefSeq" id="WP_001829391.1">
    <property type="nucleotide sequence ID" value="NZ_WBME01000004.1"/>
</dbReference>
<dbReference type="SMR" id="Q8CQT3"/>
<dbReference type="KEGG" id="sep:SE_2309"/>
<dbReference type="PATRIC" id="fig|176280.10.peg.2252"/>
<dbReference type="eggNOG" id="COG2855">
    <property type="taxonomic scope" value="Bacteria"/>
</dbReference>
<dbReference type="HOGENOM" id="CLU_033541_0_1_9"/>
<dbReference type="OrthoDB" id="9811391at2"/>
<dbReference type="Proteomes" id="UP000001411">
    <property type="component" value="Chromosome"/>
</dbReference>
<dbReference type="GO" id="GO:0005886">
    <property type="term" value="C:plasma membrane"/>
    <property type="evidence" value="ECO:0007669"/>
    <property type="project" value="UniProtKB-SubCell"/>
</dbReference>
<dbReference type="InterPro" id="IPR018383">
    <property type="entry name" value="UPF0324_pro"/>
</dbReference>
<dbReference type="PANTHER" id="PTHR30106">
    <property type="entry name" value="INNER MEMBRANE PROTEIN YEIH-RELATED"/>
    <property type="match status" value="1"/>
</dbReference>
<dbReference type="PANTHER" id="PTHR30106:SF2">
    <property type="entry name" value="UPF0324 INNER MEMBRANE PROTEIN YEIH"/>
    <property type="match status" value="1"/>
</dbReference>
<dbReference type="Pfam" id="PF03601">
    <property type="entry name" value="Cons_hypoth698"/>
    <property type="match status" value="1"/>
</dbReference>
<accession>Q8CQT3</accession>
<reference key="1">
    <citation type="journal article" date="2003" name="Mol. Microbiol.">
        <title>Genome-based analysis of virulence genes in a non-biofilm-forming Staphylococcus epidermidis strain (ATCC 12228).</title>
        <authorList>
            <person name="Zhang Y.-Q."/>
            <person name="Ren S.-X."/>
            <person name="Li H.-L."/>
            <person name="Wang Y.-X."/>
            <person name="Fu G."/>
            <person name="Yang J."/>
            <person name="Qin Z.-Q."/>
            <person name="Miao Y.-G."/>
            <person name="Wang W.-Y."/>
            <person name="Chen R.-S."/>
            <person name="Shen Y."/>
            <person name="Chen Z."/>
            <person name="Yuan Z.-H."/>
            <person name="Zhao G.-P."/>
            <person name="Qu D."/>
            <person name="Danchin A."/>
            <person name="Wen Y.-M."/>
        </authorList>
    </citation>
    <scope>NUCLEOTIDE SEQUENCE [LARGE SCALE GENOMIC DNA]</scope>
    <source>
        <strain>ATCC 12228 / FDA PCI 1200</strain>
    </source>
</reference>
<evidence type="ECO:0000255" key="1"/>
<evidence type="ECO:0000305" key="2"/>
<keyword id="KW-1003">Cell membrane</keyword>
<keyword id="KW-0472">Membrane</keyword>
<keyword id="KW-0812">Transmembrane</keyword>
<keyword id="KW-1133">Transmembrane helix</keyword>
<organism>
    <name type="scientific">Staphylococcus epidermidis (strain ATCC 12228 / FDA PCI 1200)</name>
    <dbReference type="NCBI Taxonomy" id="176280"/>
    <lineage>
        <taxon>Bacteria</taxon>
        <taxon>Bacillati</taxon>
        <taxon>Bacillota</taxon>
        <taxon>Bacilli</taxon>
        <taxon>Bacillales</taxon>
        <taxon>Staphylococcaceae</taxon>
        <taxon>Staphylococcus</taxon>
    </lineage>
</organism>
<sequence>MKSITQASFMKGIMFTFTIAIISYILAKFPILHTIGALAIAIIFAMIYRQVIGYPEHIRPGITFASKRLLKFAIILYGLKLNMGDILGKGWKLLLIDIIVIIFSISLTLLLNQIIKGNKDISILLGIGTGVCGAAAIAATAPILKSKEKDIAISVGIIALVGTIFALIYTAIEAIFNIPTITYGAWTGISLHEIAQVVLAAGIGGSEAMTFALLGKLGRVFLLIPLSIVLILYMRYKSHSSQVQQKIDIPYFLIGFIIMACINTFVPIPSLLMNIINVITTLCMLMAMVALGLNIVLKEVISKALKPFIVICITSICLSGVTLLVTSIMFK</sequence>
<proteinExistence type="inferred from homology"/>
<protein>
    <recommendedName>
        <fullName>UPF0324 membrane protein SE_2309</fullName>
    </recommendedName>
</protein>
<name>Y2309_STAES</name>
<feature type="chain" id="PRO_0000157457" description="UPF0324 membrane protein SE_2309">
    <location>
        <begin position="1"/>
        <end position="331"/>
    </location>
</feature>
<feature type="transmembrane region" description="Helical" evidence="1">
    <location>
        <begin position="7"/>
        <end position="26"/>
    </location>
</feature>
<feature type="transmembrane region" description="Helical" evidence="1">
    <location>
        <begin position="31"/>
        <end position="48"/>
    </location>
</feature>
<feature type="transmembrane region" description="Helical" evidence="1">
    <location>
        <begin position="69"/>
        <end position="88"/>
    </location>
</feature>
<feature type="transmembrane region" description="Helical" evidence="1">
    <location>
        <begin position="93"/>
        <end position="115"/>
    </location>
</feature>
<feature type="transmembrane region" description="Helical" evidence="1">
    <location>
        <begin position="122"/>
        <end position="144"/>
    </location>
</feature>
<feature type="transmembrane region" description="Helical" evidence="1">
    <location>
        <begin position="154"/>
        <end position="176"/>
    </location>
</feature>
<feature type="transmembrane region" description="Helical" evidence="1">
    <location>
        <begin position="183"/>
        <end position="205"/>
    </location>
</feature>
<feature type="transmembrane region" description="Helical" evidence="1">
    <location>
        <begin position="249"/>
        <end position="271"/>
    </location>
</feature>
<feature type="transmembrane region" description="Helical" evidence="1">
    <location>
        <begin position="275"/>
        <end position="297"/>
    </location>
</feature>
<feature type="transmembrane region" description="Helical" evidence="1">
    <location>
        <begin position="308"/>
        <end position="330"/>
    </location>
</feature>
<comment type="subcellular location">
    <subcellularLocation>
        <location evidence="2">Cell membrane</location>
        <topology evidence="2">Multi-pass membrane protein</topology>
    </subcellularLocation>
</comment>
<comment type="similarity">
    <text evidence="2">Belongs to the UPF0324 family.</text>
</comment>
<gene>
    <name type="ordered locus">SE_2309</name>
</gene>